<feature type="chain" id="PRO_1000127108" description="Small ribosomal subunit protein uS10">
    <location>
        <begin position="1"/>
        <end position="102"/>
    </location>
</feature>
<comment type="function">
    <text evidence="1">Involved in the binding of tRNA to the ribosomes.</text>
</comment>
<comment type="subunit">
    <text evidence="1">Part of the 30S ribosomal subunit.</text>
</comment>
<comment type="similarity">
    <text evidence="1">Belongs to the universal ribosomal protein uS10 family.</text>
</comment>
<evidence type="ECO:0000255" key="1">
    <source>
        <dbReference type="HAMAP-Rule" id="MF_00508"/>
    </source>
</evidence>
<evidence type="ECO:0000305" key="2"/>
<reference key="1">
    <citation type="submission" date="2008-08" db="EMBL/GenBank/DDBJ databases">
        <title>The complete genome sequence of Coprothermobacter proteolyticus strain ATCC 5245 / DSM 5265 / BT.</title>
        <authorList>
            <person name="Dodson R.J."/>
            <person name="Durkin A.S."/>
            <person name="Wu M."/>
            <person name="Eisen J."/>
            <person name="Sutton G."/>
        </authorList>
    </citation>
    <scope>NUCLEOTIDE SEQUENCE [LARGE SCALE GENOMIC DNA]</scope>
    <source>
        <strain>ATCC 35245 / DSM 5265 / OCM 4 / BT</strain>
    </source>
</reference>
<name>RS10_COPPD</name>
<gene>
    <name evidence="1" type="primary">rpsJ</name>
    <name type="ordered locus">COPRO5265_1013</name>
</gene>
<protein>
    <recommendedName>
        <fullName evidence="1">Small ribosomal subunit protein uS10</fullName>
    </recommendedName>
    <alternativeName>
        <fullName evidence="2">30S ribosomal protein S10</fullName>
    </alternativeName>
</protein>
<proteinExistence type="inferred from homology"/>
<accession>B5Y988</accession>
<sequence length="102" mass="11735">MSAQRIRIKLRSYDHRLLDQSAKRIVEVAKRTGAKVAGPIPLPTDRRVYCVTRSPHIDKDSREHFEIKMHKRLIDIIDPTQETVSNLMSLELPAGVDIHLKL</sequence>
<keyword id="KW-1185">Reference proteome</keyword>
<keyword id="KW-0687">Ribonucleoprotein</keyword>
<keyword id="KW-0689">Ribosomal protein</keyword>
<organism>
    <name type="scientific">Coprothermobacter proteolyticus (strain ATCC 35245 / DSM 5265 / OCM 4 / BT)</name>
    <dbReference type="NCBI Taxonomy" id="309798"/>
    <lineage>
        <taxon>Bacteria</taxon>
        <taxon>Pseudomonadati</taxon>
        <taxon>Coprothermobacterota</taxon>
        <taxon>Coprothermobacteria</taxon>
        <taxon>Coprothermobacterales</taxon>
        <taxon>Coprothermobacteraceae</taxon>
        <taxon>Coprothermobacter</taxon>
    </lineage>
</organism>
<dbReference type="EMBL" id="CP001145">
    <property type="protein sequence ID" value="ACI17197.1"/>
    <property type="molecule type" value="Genomic_DNA"/>
</dbReference>
<dbReference type="RefSeq" id="WP_012543849.1">
    <property type="nucleotide sequence ID" value="NC_011295.1"/>
</dbReference>
<dbReference type="SMR" id="B5Y988"/>
<dbReference type="STRING" id="309798.COPRO5265_1013"/>
<dbReference type="KEGG" id="cpo:COPRO5265_1013"/>
<dbReference type="eggNOG" id="COG0051">
    <property type="taxonomic scope" value="Bacteria"/>
</dbReference>
<dbReference type="HOGENOM" id="CLU_122625_1_3_9"/>
<dbReference type="OrthoDB" id="9804464at2"/>
<dbReference type="Proteomes" id="UP000001732">
    <property type="component" value="Chromosome"/>
</dbReference>
<dbReference type="GO" id="GO:1990904">
    <property type="term" value="C:ribonucleoprotein complex"/>
    <property type="evidence" value="ECO:0007669"/>
    <property type="project" value="UniProtKB-KW"/>
</dbReference>
<dbReference type="GO" id="GO:0005840">
    <property type="term" value="C:ribosome"/>
    <property type="evidence" value="ECO:0007669"/>
    <property type="project" value="UniProtKB-KW"/>
</dbReference>
<dbReference type="GO" id="GO:0003735">
    <property type="term" value="F:structural constituent of ribosome"/>
    <property type="evidence" value="ECO:0007669"/>
    <property type="project" value="InterPro"/>
</dbReference>
<dbReference type="GO" id="GO:0000049">
    <property type="term" value="F:tRNA binding"/>
    <property type="evidence" value="ECO:0007669"/>
    <property type="project" value="UniProtKB-UniRule"/>
</dbReference>
<dbReference type="GO" id="GO:0006412">
    <property type="term" value="P:translation"/>
    <property type="evidence" value="ECO:0007669"/>
    <property type="project" value="UniProtKB-UniRule"/>
</dbReference>
<dbReference type="FunFam" id="3.30.70.600:FF:000001">
    <property type="entry name" value="30S ribosomal protein S10"/>
    <property type="match status" value="1"/>
</dbReference>
<dbReference type="Gene3D" id="3.30.70.600">
    <property type="entry name" value="Ribosomal protein S10 domain"/>
    <property type="match status" value="1"/>
</dbReference>
<dbReference type="HAMAP" id="MF_00508">
    <property type="entry name" value="Ribosomal_uS10"/>
    <property type="match status" value="1"/>
</dbReference>
<dbReference type="InterPro" id="IPR001848">
    <property type="entry name" value="Ribosomal_uS10"/>
</dbReference>
<dbReference type="InterPro" id="IPR018268">
    <property type="entry name" value="Ribosomal_uS10_CS"/>
</dbReference>
<dbReference type="InterPro" id="IPR027486">
    <property type="entry name" value="Ribosomal_uS10_dom"/>
</dbReference>
<dbReference type="InterPro" id="IPR036838">
    <property type="entry name" value="Ribosomal_uS10_dom_sf"/>
</dbReference>
<dbReference type="NCBIfam" id="NF001861">
    <property type="entry name" value="PRK00596.1"/>
    <property type="match status" value="1"/>
</dbReference>
<dbReference type="NCBIfam" id="TIGR01049">
    <property type="entry name" value="rpsJ_bact"/>
    <property type="match status" value="1"/>
</dbReference>
<dbReference type="PANTHER" id="PTHR11700">
    <property type="entry name" value="30S RIBOSOMAL PROTEIN S10 FAMILY MEMBER"/>
    <property type="match status" value="1"/>
</dbReference>
<dbReference type="Pfam" id="PF00338">
    <property type="entry name" value="Ribosomal_S10"/>
    <property type="match status" value="1"/>
</dbReference>
<dbReference type="PRINTS" id="PR00971">
    <property type="entry name" value="RIBOSOMALS10"/>
</dbReference>
<dbReference type="SMART" id="SM01403">
    <property type="entry name" value="Ribosomal_S10"/>
    <property type="match status" value="1"/>
</dbReference>
<dbReference type="SUPFAM" id="SSF54999">
    <property type="entry name" value="Ribosomal protein S10"/>
    <property type="match status" value="1"/>
</dbReference>
<dbReference type="PROSITE" id="PS00361">
    <property type="entry name" value="RIBOSOMAL_S10"/>
    <property type="match status" value="1"/>
</dbReference>